<comment type="function">
    <text evidence="1">Required for replicative DNA synthesis. This DNA polymerase also exhibits 3' to 5' exonuclease activity.</text>
</comment>
<comment type="catalytic activity">
    <reaction evidence="1">
        <text>DNA(n) + a 2'-deoxyribonucleoside 5'-triphosphate = DNA(n+1) + diphosphate</text>
        <dbReference type="Rhea" id="RHEA:22508"/>
        <dbReference type="Rhea" id="RHEA-COMP:17339"/>
        <dbReference type="Rhea" id="RHEA-COMP:17340"/>
        <dbReference type="ChEBI" id="CHEBI:33019"/>
        <dbReference type="ChEBI" id="CHEBI:61560"/>
        <dbReference type="ChEBI" id="CHEBI:173112"/>
        <dbReference type="EC" id="2.7.7.7"/>
    </reaction>
</comment>
<comment type="subcellular location">
    <subcellularLocation>
        <location evidence="1">Cytoplasm</location>
    </subcellularLocation>
</comment>
<comment type="similarity">
    <text evidence="1">Belongs to the DNA polymerase type-C family. PolC subfamily.</text>
</comment>
<keyword id="KW-0963">Cytoplasm</keyword>
<keyword id="KW-0235">DNA replication</keyword>
<keyword id="KW-0239">DNA-directed DNA polymerase</keyword>
<keyword id="KW-0269">Exonuclease</keyword>
<keyword id="KW-0378">Hydrolase</keyword>
<keyword id="KW-0540">Nuclease</keyword>
<keyword id="KW-0548">Nucleotidyltransferase</keyword>
<keyword id="KW-0808">Transferase</keyword>
<feature type="chain" id="PRO_0000204600" description="DNA polymerase III PolC-type">
    <location>
        <begin position="1"/>
        <end position="1465"/>
    </location>
</feature>
<feature type="domain" description="Exonuclease">
    <location>
        <begin position="431"/>
        <end position="583"/>
    </location>
</feature>
<evidence type="ECO:0000255" key="1">
    <source>
        <dbReference type="HAMAP-Rule" id="MF_00356"/>
    </source>
</evidence>
<reference key="1">
    <citation type="journal article" date="2000" name="J. Biol. Chem.">
        <title>The DNA replication machine of a Gram-positive organism.</title>
        <authorList>
            <person name="Bruck I."/>
            <person name="O'Donnell M."/>
        </authorList>
    </citation>
    <scope>NUCLEOTIDE SEQUENCE [GENOMIC DNA]</scope>
</reference>
<gene>
    <name evidence="1" type="primary">polC</name>
</gene>
<organism>
    <name type="scientific">Streptococcus pyogenes</name>
    <dbReference type="NCBI Taxonomy" id="1314"/>
    <lineage>
        <taxon>Bacteria</taxon>
        <taxon>Bacillati</taxon>
        <taxon>Bacillota</taxon>
        <taxon>Bacilli</taxon>
        <taxon>Lactobacillales</taxon>
        <taxon>Streptococcaceae</taxon>
        <taxon>Streptococcus</taxon>
    </lineage>
</organism>
<sequence>MSDLFAKLMDQIEMPLDMRRSSAFSSADIIEVKVHSVSRLWEFHFAFAAVLPIATYRELHDRLIRTFEAADIKVTFDIQAAQVDYSDDLLQAYYQEAFEHAPCNSASFKSSFSKLKVTYEDDKLIIAAPGFVNNDHFRNNHLPNLVKQLEAFGFGILTIDMVSDQEMTEHLTKNFVSSRQALVKKAVQDNLEAQKSLEAMMPPVEEATPAPKFDYKERAAKRQAGFEKATITPMIEIETEENRIVFEGMVFDVERKTTRTGRHIINFKMTDYTSSFALQKWAKDDEELRKFDMIAKGAWLRVQGNIETNPFTKSLTMNVQQVKEIVRHERKDLMPEGQKRVELHAHTNMSTMDALPTVESLIDTAAKWGHKAIAITDHANVQSFPHGYHRARKAGIKAIFGLEANIVEDKVPISYEPVDMDLHEDLCGLSDVETTGLSAMNNDLIQIAASKMFKGNIVEQFDEFIDPGHPLSAFTTELTGITDKHLQGAKPLVTVLKAFQDFCKDSILVAHNASFDVGFMNANYERHDLPKITQPVIDTLEFARNLYPEYKRHGLGPLTKRFQVSLDHHHMANYDAEATGRLLFIFLKDAREKHGIKNLLQLNTDLVAEDSYKKARIKHATIYVQNQVGLKNMFKLVSLSNIKYFEGVPRIPRTVLDAHREGLLLGTACSDGEVFDAVLTKGIDAAVDLARYYDFIEIMPPAIYQPLVVRELIKDQAGIEQVIRDLIEVGKRAKKPVLATGNVHYLEPEEEIYREIIVRSLGQGAMINRTIGRGEGAQPAPLPKAHFRTTNEMLDEFAFLGKDLAYQVVVQNTQDFADRIEEVEVVKGDLYTPYIDKAEETVAELTYQKAFEIYGNPLPDIIDLRIEKELTSILGNGFAVIYLASQMLVNRSNERGYLVGSRGSVGSSFVATMIGITEVNPMPPHYVCPSCQHSEFITDGSVGSGYDLPNKPCPKCGTPYQKDGQDIPFETFLGFDGDKVPDIDLNFSGDDQPSAHLDVRDIFGDEYAFRAGTVGTVAEKTAYGFVKGYERDYGKFYRDAEVDRLAAGAAGVKRTTGQHPGGIVVIPNYMDVYDFTPVQYPADDVTASWQTTHFNFHDIDENVLKLDILGHDDPTMIRKLQDLSGIDPITIPADDPGVMALFSGTEVLGVTPEQIGTPTGMLGIPEFGTNFVRGMVNETHPTTFAELLQLSGLSHGTDVWLGNAQDLIKEGIATLKTVIGCRDDIMVYLMHAGLEPKMAFTIMERVRKGLWLKISEEERNGYIDAMRENNVPDWYIESCGKIKYMFPKAHAAAYVLMALRVAYFKVHHPIMYYCAYFSIRAKAFELKTMSGGLDAVKARMEDITIKRKNNEATNVENDLFTTLEIVNEMLERGFKFGKLDLYKSDAIEFQIKGDTLIPPFIALEGLGENVAKQIVKARQEGEFLSKMELRKRGGASSTLVEKMDEMGILGNMPEDNQLSLFDDFF</sequence>
<name>DPO3_STRPY</name>
<proteinExistence type="inferred from homology"/>
<accession>P0C0B7</accession>
<accession>Q9FDF9</accession>
<protein>
    <recommendedName>
        <fullName evidence="1">DNA polymerase III PolC-type</fullName>
        <shortName evidence="1">PolIII</shortName>
        <ecNumber evidence="1">2.7.7.7</ecNumber>
    </recommendedName>
</protein>
<dbReference type="EC" id="2.7.7.7" evidence="1"/>
<dbReference type="EMBL" id="AF280761">
    <property type="protein sequence ID" value="AAF98345.1"/>
    <property type="molecule type" value="Genomic_DNA"/>
</dbReference>
<dbReference type="SMR" id="P0C0B7"/>
<dbReference type="STRING" id="1314.SD89_08770"/>
<dbReference type="eggNOG" id="COG2176">
    <property type="taxonomic scope" value="Bacteria"/>
</dbReference>
<dbReference type="GO" id="GO:0005737">
    <property type="term" value="C:cytoplasm"/>
    <property type="evidence" value="ECO:0007669"/>
    <property type="project" value="UniProtKB-SubCell"/>
</dbReference>
<dbReference type="GO" id="GO:0008408">
    <property type="term" value="F:3'-5' exonuclease activity"/>
    <property type="evidence" value="ECO:0007669"/>
    <property type="project" value="UniProtKB-UniRule"/>
</dbReference>
<dbReference type="GO" id="GO:0003677">
    <property type="term" value="F:DNA binding"/>
    <property type="evidence" value="ECO:0007669"/>
    <property type="project" value="UniProtKB-UniRule"/>
</dbReference>
<dbReference type="GO" id="GO:0003887">
    <property type="term" value="F:DNA-directed DNA polymerase activity"/>
    <property type="evidence" value="ECO:0007669"/>
    <property type="project" value="UniProtKB-UniRule"/>
</dbReference>
<dbReference type="GO" id="GO:0006261">
    <property type="term" value="P:DNA-templated DNA replication"/>
    <property type="evidence" value="ECO:0007669"/>
    <property type="project" value="UniProtKB-UniRule"/>
</dbReference>
<dbReference type="CDD" id="cd06127">
    <property type="entry name" value="DEDDh"/>
    <property type="match status" value="1"/>
</dbReference>
<dbReference type="CDD" id="cd07435">
    <property type="entry name" value="PHP_PolIIIA_POLC"/>
    <property type="match status" value="1"/>
</dbReference>
<dbReference type="CDD" id="cd04484">
    <property type="entry name" value="polC_OBF"/>
    <property type="match status" value="1"/>
</dbReference>
<dbReference type="FunFam" id="3.30.420.10:FF:000045">
    <property type="entry name" value="3'-5' exonuclease DinG"/>
    <property type="match status" value="1"/>
</dbReference>
<dbReference type="Gene3D" id="1.10.150.870">
    <property type="match status" value="1"/>
</dbReference>
<dbReference type="Gene3D" id="3.30.1900.20">
    <property type="match status" value="1"/>
</dbReference>
<dbReference type="Gene3D" id="6.10.140.1510">
    <property type="match status" value="1"/>
</dbReference>
<dbReference type="Gene3D" id="3.20.20.140">
    <property type="entry name" value="Metal-dependent hydrolases"/>
    <property type="match status" value="2"/>
</dbReference>
<dbReference type="Gene3D" id="2.40.50.140">
    <property type="entry name" value="Nucleic acid-binding proteins"/>
    <property type="match status" value="1"/>
</dbReference>
<dbReference type="Gene3D" id="1.10.150.700">
    <property type="entry name" value="PolC, middle finger domain"/>
    <property type="match status" value="1"/>
</dbReference>
<dbReference type="Gene3D" id="3.30.420.10">
    <property type="entry name" value="Ribonuclease H-like superfamily/Ribonuclease H"/>
    <property type="match status" value="1"/>
</dbReference>
<dbReference type="HAMAP" id="MF_00356">
    <property type="entry name" value="DNApol_PolC"/>
    <property type="match status" value="1"/>
</dbReference>
<dbReference type="InterPro" id="IPR011708">
    <property type="entry name" value="DNA_pol3_alpha_NTPase_dom"/>
</dbReference>
<dbReference type="InterPro" id="IPR040982">
    <property type="entry name" value="DNA_pol3_finger"/>
</dbReference>
<dbReference type="InterPro" id="IPR024754">
    <property type="entry name" value="DNA_PolC-like_N_II"/>
</dbReference>
<dbReference type="InterPro" id="IPR028112">
    <property type="entry name" value="DNA_PolC-type_N_I"/>
</dbReference>
<dbReference type="InterPro" id="IPR004805">
    <property type="entry name" value="DnaE2/DnaE/PolC"/>
</dbReference>
<dbReference type="InterPro" id="IPR029460">
    <property type="entry name" value="DNAPol_HHH"/>
</dbReference>
<dbReference type="InterPro" id="IPR006054">
    <property type="entry name" value="DnaQ"/>
</dbReference>
<dbReference type="InterPro" id="IPR013520">
    <property type="entry name" value="Exonuclease_RNaseT/DNA_pol3"/>
</dbReference>
<dbReference type="InterPro" id="IPR012340">
    <property type="entry name" value="NA-bd_OB-fold"/>
</dbReference>
<dbReference type="InterPro" id="IPR004013">
    <property type="entry name" value="PHP_dom"/>
</dbReference>
<dbReference type="InterPro" id="IPR003141">
    <property type="entry name" value="Pol/His_phosphatase_N"/>
</dbReference>
<dbReference type="InterPro" id="IPR016195">
    <property type="entry name" value="Pol/histidinol_Pase-like"/>
</dbReference>
<dbReference type="InterPro" id="IPR006308">
    <property type="entry name" value="Pol_III_a_PolC-type_gram_pos"/>
</dbReference>
<dbReference type="InterPro" id="IPR044923">
    <property type="entry name" value="PolC_middle_finger_sf"/>
</dbReference>
<dbReference type="InterPro" id="IPR012337">
    <property type="entry name" value="RNaseH-like_sf"/>
</dbReference>
<dbReference type="InterPro" id="IPR036397">
    <property type="entry name" value="RNaseH_sf"/>
</dbReference>
<dbReference type="NCBIfam" id="TIGR00573">
    <property type="entry name" value="dnaq"/>
    <property type="match status" value="1"/>
</dbReference>
<dbReference type="NCBIfam" id="TIGR01405">
    <property type="entry name" value="polC_Gram_pos"/>
    <property type="match status" value="1"/>
</dbReference>
<dbReference type="NCBIfam" id="NF001688">
    <property type="entry name" value="PRK00448.1"/>
    <property type="match status" value="1"/>
</dbReference>
<dbReference type="PANTHER" id="PTHR32294:SF5">
    <property type="entry name" value="DNA POLYMERASE III POLC-TYPE"/>
    <property type="match status" value="1"/>
</dbReference>
<dbReference type="PANTHER" id="PTHR32294">
    <property type="entry name" value="DNA POLYMERASE III SUBUNIT ALPHA"/>
    <property type="match status" value="1"/>
</dbReference>
<dbReference type="Pfam" id="PF14480">
    <property type="entry name" value="DNA_pol3_a_NI"/>
    <property type="match status" value="1"/>
</dbReference>
<dbReference type="Pfam" id="PF11490">
    <property type="entry name" value="DNA_pol3_a_NII"/>
    <property type="match status" value="1"/>
</dbReference>
<dbReference type="Pfam" id="PF07733">
    <property type="entry name" value="DNA_pol3_alpha"/>
    <property type="match status" value="2"/>
</dbReference>
<dbReference type="Pfam" id="PF17657">
    <property type="entry name" value="DNA_pol3_finger"/>
    <property type="match status" value="1"/>
</dbReference>
<dbReference type="Pfam" id="PF14579">
    <property type="entry name" value="HHH_6"/>
    <property type="match status" value="1"/>
</dbReference>
<dbReference type="Pfam" id="PF02811">
    <property type="entry name" value="PHP"/>
    <property type="match status" value="2"/>
</dbReference>
<dbReference type="Pfam" id="PF00929">
    <property type="entry name" value="RNase_T"/>
    <property type="match status" value="1"/>
</dbReference>
<dbReference type="SMART" id="SM00479">
    <property type="entry name" value="EXOIII"/>
    <property type="match status" value="1"/>
</dbReference>
<dbReference type="SMART" id="SM00481">
    <property type="entry name" value="POLIIIAc"/>
    <property type="match status" value="1"/>
</dbReference>
<dbReference type="SUPFAM" id="SSF50249">
    <property type="entry name" value="Nucleic acid-binding proteins"/>
    <property type="match status" value="1"/>
</dbReference>
<dbReference type="SUPFAM" id="SSF89550">
    <property type="entry name" value="PHP domain-like"/>
    <property type="match status" value="1"/>
</dbReference>
<dbReference type="SUPFAM" id="SSF53098">
    <property type="entry name" value="Ribonuclease H-like"/>
    <property type="match status" value="1"/>
</dbReference>